<evidence type="ECO:0000255" key="1">
    <source>
        <dbReference type="PROSITE-ProRule" id="PRU00037"/>
    </source>
</evidence>
<evidence type="ECO:0000255" key="2">
    <source>
        <dbReference type="PROSITE-ProRule" id="PRU00042"/>
    </source>
</evidence>
<evidence type="ECO:0000256" key="3">
    <source>
        <dbReference type="SAM" id="MobiDB-lite"/>
    </source>
</evidence>
<evidence type="ECO:0000269" key="4">
    <source>
    </source>
</evidence>
<evidence type="ECO:0000269" key="5">
    <source>
    </source>
</evidence>
<evidence type="ECO:0000303" key="6">
    <source>
    </source>
</evidence>
<evidence type="ECO:0000305" key="7"/>
<protein>
    <recommendedName>
        <fullName>Zinc finger and BTB domain-containing protein 49</fullName>
    </recommendedName>
    <alternativeName>
        <fullName>Zinc finger protein 509</fullName>
    </alternativeName>
</protein>
<comment type="function">
    <text evidence="5">Transcription factor. Inhibits cell proliferation by activating either CDKN1A/p21 transcription or RB1 transcription.</text>
</comment>
<comment type="function">
    <molecule>Isoform 1</molecule>
    <text evidence="5">Binds CDKN1A promoter and activates its transcription; this activity is further potentiated in the presence of EP300 (synergistic) and ZBTB17/Miz-1 (additive).</text>
</comment>
<comment type="function">
    <molecule>Isoform 3</molecule>
    <text evidence="5">Activates RB1 transcription most probably by antagonizing ZBTB17 repression of RB1. Does not bind directly RB1 promoter.</text>
</comment>
<comment type="subunit">
    <text evidence="5">Isoform 1 interacts with EP300 and KAT5/Tip60. The interaction with EP300 is direct and leads to synergistic induction of CDKN1A. On the CDKN1A promoter, forms a complex with ZBTB17/Miz-1; this interaction leads to additive CDKN1A transactivation. Isoform 3 also interacts with ZBTB17; this interaction may block ZBTB17 repressor activity.</text>
</comment>
<comment type="interaction">
    <interactant intactId="EBI-2859943">
        <id>Q6ZSB9</id>
    </interactant>
    <interactant intactId="EBI-948169">
        <id>P13637</id>
        <label>ATP1A3</label>
    </interactant>
    <organismsDiffer>false</organismsDiffer>
    <experiments>3</experiments>
</comment>
<comment type="interaction">
    <interactant intactId="EBI-2859943">
        <id>Q6ZSB9</id>
    </interactant>
    <interactant intactId="EBI-739624">
        <id>Q8NHQ1</id>
        <label>CEP70</label>
    </interactant>
    <organismsDiffer>false</organismsDiffer>
    <experiments>5</experiments>
</comment>
<comment type="interaction">
    <interactant intactId="EBI-2859943">
        <id>Q6ZSB9</id>
    </interactant>
    <interactant intactId="EBI-372594">
        <id>Q99828</id>
        <label>CIB1</label>
    </interactant>
    <organismsDiffer>false</organismsDiffer>
    <experiments>3</experiments>
</comment>
<comment type="interaction">
    <interactant intactId="EBI-2859943">
        <id>Q6ZSB9</id>
    </interactant>
    <interactant intactId="EBI-349832">
        <id>Q9HD26</id>
        <label>GOPC</label>
    </interactant>
    <organismsDiffer>false</organismsDiffer>
    <experiments>5</experiments>
</comment>
<comment type="interaction">
    <interactant intactId="EBI-2859943">
        <id>Q6ZSB9</id>
    </interactant>
    <interactant intactId="EBI-11102276">
        <id>Q9HD26-2</id>
        <label>GOPC</label>
    </interactant>
    <organismsDiffer>false</organismsDiffer>
    <experiments>3</experiments>
</comment>
<comment type="interaction">
    <interactant intactId="EBI-2859943">
        <id>Q6ZSB9</id>
    </interactant>
    <interactant intactId="EBI-716404">
        <id>P16284</id>
        <label>PECAM1</label>
    </interactant>
    <organismsDiffer>false</organismsDiffer>
    <experiments>3</experiments>
</comment>
<comment type="interaction">
    <interactant intactId="EBI-2859943">
        <id>Q6ZSB9</id>
    </interactant>
    <interactant intactId="EBI-79165">
        <id>Q9NRD5</id>
        <label>PICK1</label>
    </interactant>
    <organismsDiffer>false</organismsDiffer>
    <experiments>3</experiments>
</comment>
<comment type="interaction">
    <interactant intactId="EBI-2859943">
        <id>Q6ZSB9</id>
    </interactant>
    <interactant intactId="EBI-355744">
        <id>Q12933</id>
        <label>TRAF2</label>
    </interactant>
    <organismsDiffer>false</organismsDiffer>
    <experiments>3</experiments>
</comment>
<comment type="interaction">
    <interactant intactId="EBI-2859943">
        <id>Q6ZSB9</id>
    </interactant>
    <interactant intactId="EBI-357631">
        <id>Q13114</id>
        <label>TRAF3</label>
    </interactant>
    <organismsDiffer>false</organismsDiffer>
    <experiments>3</experiments>
</comment>
<comment type="interaction">
    <interactant intactId="EBI-2859943">
        <id>Q6ZSB9</id>
    </interactant>
    <interactant intactId="EBI-2107455">
        <id>Q08AM6</id>
        <label>VAC14</label>
    </interactant>
    <organismsDiffer>false</organismsDiffer>
    <experiments>3</experiments>
</comment>
<comment type="interaction">
    <interactant intactId="EBI-2859943">
        <id>Q6ZSB9</id>
    </interactant>
    <interactant intactId="EBI-12157263">
        <id>P40337-2</id>
        <label>VHL</label>
    </interactant>
    <organismsDiffer>false</organismsDiffer>
    <experiments>3</experiments>
</comment>
<comment type="interaction">
    <interactant intactId="EBI-2859943">
        <id>Q6ZSB9</id>
    </interactant>
    <interactant intactId="EBI-2515601">
        <id>Q8N680</id>
        <label>ZBTB2</label>
    </interactant>
    <organismsDiffer>false</organismsDiffer>
    <experiments>3</experiments>
</comment>
<comment type="interaction">
    <interactant intactId="EBI-2859943">
        <id>Q6ZSB9</id>
    </interactant>
    <interactant intactId="EBI-742740">
        <id>Q96BR9</id>
        <label>ZBTB8A</label>
    </interactant>
    <organismsDiffer>false</organismsDiffer>
    <experiments>6</experiments>
</comment>
<comment type="subcellular location">
    <molecule>Isoform 1</molecule>
    <subcellularLocation>
        <location evidence="5">Cytoplasm</location>
    </subcellularLocation>
    <subcellularLocation>
        <location evidence="5">Nucleus</location>
    </subcellularLocation>
    <text evidence="5">Predominantly located in the nucleus.</text>
</comment>
<comment type="subcellular location">
    <molecule>Isoform 3</molecule>
    <subcellularLocation>
        <location evidence="5">Cytoplasm</location>
    </subcellularLocation>
    <subcellularLocation>
        <location evidence="5">Nucleus</location>
    </subcellularLocation>
</comment>
<comment type="alternative products">
    <event type="alternative splicing"/>
    <isoform>
        <id>Q6ZSB9-1</id>
        <name>1</name>
        <name>ZNF509L</name>
        <sequence type="displayed"/>
    </isoform>
    <isoform>
        <id>Q6ZSB9-2</id>
        <name>2</name>
        <sequence type="described" ref="VSP_016343"/>
    </isoform>
    <isoform>
        <id>Q6ZSB9-3</id>
        <name>3</name>
        <name>ZNF509S1</name>
        <sequence type="described" ref="VSP_057623 VSP_057625"/>
    </isoform>
    <isoform>
        <id>Q6ZSB9-4</id>
        <name>4</name>
        <name>ZNF509S2</name>
        <sequence type="described" ref="VSP_057624 VSP_057625"/>
    </isoform>
    <isoform>
        <id>Q6ZSB9-5</id>
        <name>5</name>
        <name>ZNF509S3</name>
        <sequence type="described" ref="VSP_057626 VSP_057627"/>
    </isoform>
</comment>
<comment type="tissue specificity">
    <text evidence="5">Highly expressed in normal epidermis and in other epithelial tissues, including in colon and lung. Tends to be down-regulated in colon, lung and skin cancer tissues.</text>
</comment>
<comment type="induction">
    <text evidence="5">Induced by the DNA-damaging agent etoposide. This induction is mediated by TP53 at the transcriptional level.</text>
</comment>
<comment type="similarity">
    <text evidence="7">Belongs to the krueppel C2H2-type zinc-finger protein family.</text>
</comment>
<comment type="sequence caution" evidence="7">
    <conflict type="erroneous termination">
        <sequence resource="EMBL-CDS" id="AAH16477"/>
    </conflict>
    <text>Truncated C-terminus.</text>
</comment>
<sequence>MDPVATHSCHLLQQLHEQRIQGLLCDCMLVVKGVCFKAHKNVLAAFSQYFRSLFQNSSSQKNDVFHLDVKNVSGIGQILDFMYTSHLDLNQDNIQVMLDTAQCLQVQNVLSLCHTFLKSATVVQPPGMPCNSTLSLQSTLTPDATCVISENYPPHLLQECSADAQQNKTLDESHPHASPSVNRHHSAGEISKQAPDTSDGSCTELPFKQPNYYYKLRNFYSKQYHKHAAGPSQERVVEQPFAFSTSTDLTTVESQPCAVSHSECILESPEHLPSNFLAQPVNDSAPHPESDATCQQPVKQMRLKKAIHLKKLNFLKSQKYAEQVSEPKSDDGLTKRLESASKNTLEKASSQSAEEKESEEVVSCENFNCISETERPEDPAALEDQSQTLQSQRQYACELCGKPFKHPSNLELHKRSHTGEKPFECNICGKHFSQAGNLQTHLRRHSGEKPYICEICGKRFAASGDVQRHIIIHSGEKPHLCDICGRGFSNFSNLKEHKKTHTADKVFTCDECGKSFNMQRKLVKHRIRHTGERPYSCSACGKCFGGSGDLRRHVRTHTGEKPYTCEICNKCFTRSAVLRRHKKMHCKAGDESPDVLEELSQAIETSDLEKSQSSDSFSQDTSVTLMPVSVKLPVHPVENSVAEFDSHSGGSYCKLRSMIQPHGVSDQEKLSLDPGKLAKPQMQQTQPQAYAYSDVDTPAGGEPLQADGMAMIRSSLAALDNHGGDPLGSRASSTTYRNSEGQFFSSMTLWGLAMKTLQNENELDQ</sequence>
<keyword id="KW-0010">Activator</keyword>
<keyword id="KW-0025">Alternative splicing</keyword>
<keyword id="KW-0131">Cell cycle</keyword>
<keyword id="KW-0963">Cytoplasm</keyword>
<keyword id="KW-0238">DNA-binding</keyword>
<keyword id="KW-0479">Metal-binding</keyword>
<keyword id="KW-0539">Nucleus</keyword>
<keyword id="KW-1267">Proteomics identification</keyword>
<keyword id="KW-1185">Reference proteome</keyword>
<keyword id="KW-0677">Repeat</keyword>
<keyword id="KW-0804">Transcription</keyword>
<keyword id="KW-0805">Transcription regulation</keyword>
<keyword id="KW-0862">Zinc</keyword>
<keyword id="KW-0863">Zinc-finger</keyword>
<reference key="1">
    <citation type="journal article" date="2004" name="Nat. Genet.">
        <title>Complete sequencing and characterization of 21,243 full-length human cDNAs.</title>
        <authorList>
            <person name="Ota T."/>
            <person name="Suzuki Y."/>
            <person name="Nishikawa T."/>
            <person name="Otsuki T."/>
            <person name="Sugiyama T."/>
            <person name="Irie R."/>
            <person name="Wakamatsu A."/>
            <person name="Hayashi K."/>
            <person name="Sato H."/>
            <person name="Nagai K."/>
            <person name="Kimura K."/>
            <person name="Makita H."/>
            <person name="Sekine M."/>
            <person name="Obayashi M."/>
            <person name="Nishi T."/>
            <person name="Shibahara T."/>
            <person name="Tanaka T."/>
            <person name="Ishii S."/>
            <person name="Yamamoto J."/>
            <person name="Saito K."/>
            <person name="Kawai Y."/>
            <person name="Isono Y."/>
            <person name="Nakamura Y."/>
            <person name="Nagahari K."/>
            <person name="Murakami K."/>
            <person name="Yasuda T."/>
            <person name="Iwayanagi T."/>
            <person name="Wagatsuma M."/>
            <person name="Shiratori A."/>
            <person name="Sudo H."/>
            <person name="Hosoiri T."/>
            <person name="Kaku Y."/>
            <person name="Kodaira H."/>
            <person name="Kondo H."/>
            <person name="Sugawara M."/>
            <person name="Takahashi M."/>
            <person name="Kanda K."/>
            <person name="Yokoi T."/>
            <person name="Furuya T."/>
            <person name="Kikkawa E."/>
            <person name="Omura Y."/>
            <person name="Abe K."/>
            <person name="Kamihara K."/>
            <person name="Katsuta N."/>
            <person name="Sato K."/>
            <person name="Tanikawa M."/>
            <person name="Yamazaki M."/>
            <person name="Ninomiya K."/>
            <person name="Ishibashi T."/>
            <person name="Yamashita H."/>
            <person name="Murakawa K."/>
            <person name="Fujimori K."/>
            <person name="Tanai H."/>
            <person name="Kimata M."/>
            <person name="Watanabe M."/>
            <person name="Hiraoka S."/>
            <person name="Chiba Y."/>
            <person name="Ishida S."/>
            <person name="Ono Y."/>
            <person name="Takiguchi S."/>
            <person name="Watanabe S."/>
            <person name="Yosida M."/>
            <person name="Hotuta T."/>
            <person name="Kusano J."/>
            <person name="Kanehori K."/>
            <person name="Takahashi-Fujii A."/>
            <person name="Hara H."/>
            <person name="Tanase T.-O."/>
            <person name="Nomura Y."/>
            <person name="Togiya S."/>
            <person name="Komai F."/>
            <person name="Hara R."/>
            <person name="Takeuchi K."/>
            <person name="Arita M."/>
            <person name="Imose N."/>
            <person name="Musashino K."/>
            <person name="Yuuki H."/>
            <person name="Oshima A."/>
            <person name="Sasaki N."/>
            <person name="Aotsuka S."/>
            <person name="Yoshikawa Y."/>
            <person name="Matsunawa H."/>
            <person name="Ichihara T."/>
            <person name="Shiohata N."/>
            <person name="Sano S."/>
            <person name="Moriya S."/>
            <person name="Momiyama H."/>
            <person name="Satoh N."/>
            <person name="Takami S."/>
            <person name="Terashima Y."/>
            <person name="Suzuki O."/>
            <person name="Nakagawa S."/>
            <person name="Senoh A."/>
            <person name="Mizoguchi H."/>
            <person name="Goto Y."/>
            <person name="Shimizu F."/>
            <person name="Wakebe H."/>
            <person name="Hishigaki H."/>
            <person name="Watanabe T."/>
            <person name="Sugiyama A."/>
            <person name="Takemoto M."/>
            <person name="Kawakami B."/>
            <person name="Yamazaki M."/>
            <person name="Watanabe K."/>
            <person name="Kumagai A."/>
            <person name="Itakura S."/>
            <person name="Fukuzumi Y."/>
            <person name="Fujimori Y."/>
            <person name="Komiyama M."/>
            <person name="Tashiro H."/>
            <person name="Tanigami A."/>
            <person name="Fujiwara T."/>
            <person name="Ono T."/>
            <person name="Yamada K."/>
            <person name="Fujii Y."/>
            <person name="Ozaki K."/>
            <person name="Hirao M."/>
            <person name="Ohmori Y."/>
            <person name="Kawabata A."/>
            <person name="Hikiji T."/>
            <person name="Kobatake N."/>
            <person name="Inagaki H."/>
            <person name="Ikema Y."/>
            <person name="Okamoto S."/>
            <person name="Okitani R."/>
            <person name="Kawakami T."/>
            <person name="Noguchi S."/>
            <person name="Itoh T."/>
            <person name="Shigeta K."/>
            <person name="Senba T."/>
            <person name="Matsumura K."/>
            <person name="Nakajima Y."/>
            <person name="Mizuno T."/>
            <person name="Morinaga M."/>
            <person name="Sasaki M."/>
            <person name="Togashi T."/>
            <person name="Oyama M."/>
            <person name="Hata H."/>
            <person name="Watanabe M."/>
            <person name="Komatsu T."/>
            <person name="Mizushima-Sugano J."/>
            <person name="Satoh T."/>
            <person name="Shirai Y."/>
            <person name="Takahashi Y."/>
            <person name="Nakagawa K."/>
            <person name="Okumura K."/>
            <person name="Nagase T."/>
            <person name="Nomura N."/>
            <person name="Kikuchi H."/>
            <person name="Masuho Y."/>
            <person name="Yamashita R."/>
            <person name="Nakai K."/>
            <person name="Yada T."/>
            <person name="Nakamura Y."/>
            <person name="Ohara O."/>
            <person name="Isogai T."/>
            <person name="Sugano S."/>
        </authorList>
    </citation>
    <scope>NUCLEOTIDE SEQUENCE [LARGE SCALE MRNA] (ISOFORM 1)</scope>
    <source>
        <tissue>Tongue</tissue>
    </source>
</reference>
<reference key="2">
    <citation type="journal article" date="2005" name="Nature">
        <title>Generation and annotation of the DNA sequences of human chromosomes 2 and 4.</title>
        <authorList>
            <person name="Hillier L.W."/>
            <person name="Graves T.A."/>
            <person name="Fulton R.S."/>
            <person name="Fulton L.A."/>
            <person name="Pepin K.H."/>
            <person name="Minx P."/>
            <person name="Wagner-McPherson C."/>
            <person name="Layman D."/>
            <person name="Wylie K."/>
            <person name="Sekhon M."/>
            <person name="Becker M.C."/>
            <person name="Fewell G.A."/>
            <person name="Delehaunty K.D."/>
            <person name="Miner T.L."/>
            <person name="Nash W.E."/>
            <person name="Kremitzki C."/>
            <person name="Oddy L."/>
            <person name="Du H."/>
            <person name="Sun H."/>
            <person name="Bradshaw-Cordum H."/>
            <person name="Ali J."/>
            <person name="Carter J."/>
            <person name="Cordes M."/>
            <person name="Harris A."/>
            <person name="Isak A."/>
            <person name="van Brunt A."/>
            <person name="Nguyen C."/>
            <person name="Du F."/>
            <person name="Courtney L."/>
            <person name="Kalicki J."/>
            <person name="Ozersky P."/>
            <person name="Abbott S."/>
            <person name="Armstrong J."/>
            <person name="Belter E.A."/>
            <person name="Caruso L."/>
            <person name="Cedroni M."/>
            <person name="Cotton M."/>
            <person name="Davidson T."/>
            <person name="Desai A."/>
            <person name="Elliott G."/>
            <person name="Erb T."/>
            <person name="Fronick C."/>
            <person name="Gaige T."/>
            <person name="Haakenson W."/>
            <person name="Haglund K."/>
            <person name="Holmes A."/>
            <person name="Harkins R."/>
            <person name="Kim K."/>
            <person name="Kruchowski S.S."/>
            <person name="Strong C.M."/>
            <person name="Grewal N."/>
            <person name="Goyea E."/>
            <person name="Hou S."/>
            <person name="Levy A."/>
            <person name="Martinka S."/>
            <person name="Mead K."/>
            <person name="McLellan M.D."/>
            <person name="Meyer R."/>
            <person name="Randall-Maher J."/>
            <person name="Tomlinson C."/>
            <person name="Dauphin-Kohlberg S."/>
            <person name="Kozlowicz-Reilly A."/>
            <person name="Shah N."/>
            <person name="Swearengen-Shahid S."/>
            <person name="Snider J."/>
            <person name="Strong J.T."/>
            <person name="Thompson J."/>
            <person name="Yoakum M."/>
            <person name="Leonard S."/>
            <person name="Pearman C."/>
            <person name="Trani L."/>
            <person name="Radionenko M."/>
            <person name="Waligorski J.E."/>
            <person name="Wang C."/>
            <person name="Rock S.M."/>
            <person name="Tin-Wollam A.-M."/>
            <person name="Maupin R."/>
            <person name="Latreille P."/>
            <person name="Wendl M.C."/>
            <person name="Yang S.-P."/>
            <person name="Pohl C."/>
            <person name="Wallis J.W."/>
            <person name="Spieth J."/>
            <person name="Bieri T.A."/>
            <person name="Berkowicz N."/>
            <person name="Nelson J.O."/>
            <person name="Osborne J."/>
            <person name="Ding L."/>
            <person name="Meyer R."/>
            <person name="Sabo A."/>
            <person name="Shotland Y."/>
            <person name="Sinha P."/>
            <person name="Wohldmann P.E."/>
            <person name="Cook L.L."/>
            <person name="Hickenbotham M.T."/>
            <person name="Eldred J."/>
            <person name="Williams D."/>
            <person name="Jones T.A."/>
            <person name="She X."/>
            <person name="Ciccarelli F.D."/>
            <person name="Izaurralde E."/>
            <person name="Taylor J."/>
            <person name="Schmutz J."/>
            <person name="Myers R.M."/>
            <person name="Cox D.R."/>
            <person name="Huang X."/>
            <person name="McPherson J.D."/>
            <person name="Mardis E.R."/>
            <person name="Clifton S.W."/>
            <person name="Warren W.C."/>
            <person name="Chinwalla A.T."/>
            <person name="Eddy S.R."/>
            <person name="Marra M.A."/>
            <person name="Ovcharenko I."/>
            <person name="Furey T.S."/>
            <person name="Miller W."/>
            <person name="Eichler E.E."/>
            <person name="Bork P."/>
            <person name="Suyama M."/>
            <person name="Torrents D."/>
            <person name="Waterston R.H."/>
            <person name="Wilson R.K."/>
        </authorList>
    </citation>
    <scope>NUCLEOTIDE SEQUENCE [LARGE SCALE GENOMIC DNA]</scope>
</reference>
<reference key="3">
    <citation type="journal article" date="2004" name="Genome Res.">
        <title>The status, quality, and expansion of the NIH full-length cDNA project: the Mammalian Gene Collection (MGC).</title>
        <authorList>
            <consortium name="The MGC Project Team"/>
        </authorList>
    </citation>
    <scope>NUCLEOTIDE SEQUENCE [LARGE SCALE MRNA] (ISOFORM 1)</scope>
    <scope>NUCLEOTIDE SEQUENCE [LARGE SCALE MRNA] OF 265-765 (ISOFORM 2)</scope>
    <scope>VARIANTS ALA-556 AND VAL-642</scope>
    <source>
        <tissue>Lymph</tissue>
        <tissue>Ovary</tissue>
    </source>
</reference>
<reference key="4">
    <citation type="submission" date="2005-03" db="EMBL/GenBank/DDBJ databases">
        <authorList>
            <person name="Totoki Y."/>
            <person name="Toyoda A."/>
            <person name="Takeda T."/>
            <person name="Sakaki Y."/>
            <person name="Tanaka A."/>
            <person name="Yokoyama S."/>
            <person name="Ohara O."/>
            <person name="Nagase T."/>
            <person name="Kikuno R.F."/>
        </authorList>
    </citation>
    <scope>NUCLEOTIDE SEQUENCE [LARGE SCALE MRNA] OF 504-765</scope>
    <source>
        <tissue>Brain</tissue>
    </source>
</reference>
<reference key="5">
    <citation type="journal article" date="2014" name="Nucleic Acids Res.">
        <title>Two ZNF509 (ZBTB49) isoforms induce cell-cycle arrest by activating transcription of p21/CDKN1A and RB upon exposure to genotoxic stress.</title>
        <authorList>
            <person name="Jeon B.N."/>
            <person name="Kim M.K."/>
            <person name="Yoon J.H."/>
            <person name="Kim M.Y."/>
            <person name="An H."/>
            <person name="Noh H.J."/>
            <person name="Choi W.I."/>
            <person name="Koh D.I."/>
            <person name="Hur M.W."/>
        </authorList>
    </citation>
    <scope>FUNCTION (ISOFORMS 1 AND 3)</scope>
    <scope>INTERACTION WITH EP300 AND KAT5 (ISOFORM 1)</scope>
    <scope>INTERACTION WITH ZBTB17 (ISOFORMS 1 AND 3)</scope>
    <scope>ALTERNATIVE SPLICING (ISOFORMS 1; 3; 4 AND 5)</scope>
    <scope>SUBCELLULAR LOCATION (ISOFORMS 1 AND 3)</scope>
    <scope>TISSUE SPECIFICITY</scope>
    <scope>INDUCTION BY ETOPOSIDE</scope>
</reference>
<proteinExistence type="evidence at protein level"/>
<gene>
    <name type="primary">ZBTB49</name>
    <name type="synonym">ZNF509</name>
</gene>
<name>ZBT49_HUMAN</name>
<feature type="chain" id="PRO_0000047626" description="Zinc finger and BTB domain-containing protein 49">
    <location>
        <begin position="1"/>
        <end position="765"/>
    </location>
</feature>
<feature type="domain" description="BTB" evidence="1">
    <location>
        <begin position="25"/>
        <end position="91"/>
    </location>
</feature>
<feature type="zinc finger region" description="C2H2-type 1" evidence="2">
    <location>
        <begin position="395"/>
        <end position="417"/>
    </location>
</feature>
<feature type="zinc finger region" description="C2H2-type 2" evidence="2">
    <location>
        <begin position="423"/>
        <end position="445"/>
    </location>
</feature>
<feature type="zinc finger region" description="C2H2-type 3" evidence="2">
    <location>
        <begin position="451"/>
        <end position="473"/>
    </location>
</feature>
<feature type="zinc finger region" description="C2H2-type 4" evidence="2">
    <location>
        <begin position="479"/>
        <end position="501"/>
    </location>
</feature>
<feature type="zinc finger region" description="C2H2-type 5" evidence="2">
    <location>
        <begin position="507"/>
        <end position="529"/>
    </location>
</feature>
<feature type="zinc finger region" description="C2H2-type 6" evidence="2">
    <location>
        <begin position="535"/>
        <end position="557"/>
    </location>
</feature>
<feature type="zinc finger region" description="C2H2-type 7" evidence="2">
    <location>
        <begin position="563"/>
        <end position="585"/>
    </location>
</feature>
<feature type="region of interest" description="Disordered" evidence="3">
    <location>
        <begin position="165"/>
        <end position="203"/>
    </location>
</feature>
<feature type="region of interest" description="Disordered" evidence="3">
    <location>
        <begin position="275"/>
        <end position="294"/>
    </location>
</feature>
<feature type="splice variant" id="VSP_016343" description="In isoform 2." evidence="6">
    <location>
        <begin position="419"/>
        <end position="540"/>
    </location>
</feature>
<feature type="splice variant" id="VSP_057623" description="In isoform 3." evidence="5">
    <original>E</original>
    <variation>N</variation>
    <location>
        <position position="420"/>
    </location>
</feature>
<feature type="splice variant" id="VSP_057624" description="In isoform 4." evidence="5">
    <original>E</original>
    <variation>R</variation>
    <location>
        <position position="420"/>
    </location>
</feature>
<feature type="splice variant" id="VSP_057625" description="In isoform 3 and isoform 4." evidence="5">
    <location>
        <begin position="421"/>
        <end position="765"/>
    </location>
</feature>
<feature type="splice variant" id="VSP_057626" description="In isoform 5." evidence="5">
    <original>FAASGDV</original>
    <variation>EMFWGIR</variation>
    <location>
        <begin position="460"/>
        <end position="466"/>
    </location>
</feature>
<feature type="splice variant" id="VSP_057627" description="In isoform 5." evidence="5">
    <location>
        <begin position="467"/>
        <end position="765"/>
    </location>
</feature>
<feature type="sequence variant" id="VAR_057422" description="In dbSNP:rs2920217.">
    <original>Y</original>
    <variation>S</variation>
    <location>
        <position position="320"/>
    </location>
</feature>
<feature type="sequence variant" id="VAR_057423" description="In dbSNP:rs4689254.">
    <original>A</original>
    <variation>T</variation>
    <location>
        <position position="348"/>
    </location>
</feature>
<feature type="sequence variant" id="VAR_073227" description="In dbSNP:rs146575965." evidence="4">
    <original>T</original>
    <variation>A</variation>
    <location>
        <position position="556"/>
    </location>
</feature>
<feature type="sequence variant" id="VAR_057424" description="In dbSNP:rs34293093." evidence="4">
    <original>A</original>
    <variation>V</variation>
    <location>
        <position position="642"/>
    </location>
</feature>
<feature type="sequence conflict" description="In Ref. 1; BAC87035." evidence="7" ref="1">
    <original>K</original>
    <variation>E</variation>
    <location>
        <position position="449"/>
    </location>
</feature>
<feature type="sequence conflict" description="In Ref. 1; BAC87035." evidence="7" ref="1">
    <original>V</original>
    <variation>I</variation>
    <location>
        <position position="506"/>
    </location>
</feature>
<feature type="sequence conflict" description="In Ref. 1; BAF85240." evidence="7" ref="1">
    <original>S</original>
    <variation>P</variation>
    <location>
        <position position="618"/>
    </location>
</feature>
<organism>
    <name type="scientific">Homo sapiens</name>
    <name type="common">Human</name>
    <dbReference type="NCBI Taxonomy" id="9606"/>
    <lineage>
        <taxon>Eukaryota</taxon>
        <taxon>Metazoa</taxon>
        <taxon>Chordata</taxon>
        <taxon>Craniata</taxon>
        <taxon>Vertebrata</taxon>
        <taxon>Euteleostomi</taxon>
        <taxon>Mammalia</taxon>
        <taxon>Eutheria</taxon>
        <taxon>Euarchontoglires</taxon>
        <taxon>Primates</taxon>
        <taxon>Haplorrhini</taxon>
        <taxon>Catarrhini</taxon>
        <taxon>Hominidae</taxon>
        <taxon>Homo</taxon>
    </lineage>
</organism>
<dbReference type="EMBL" id="AK127560">
    <property type="protein sequence ID" value="BAC87035.1"/>
    <property type="molecule type" value="mRNA"/>
</dbReference>
<dbReference type="EMBL" id="AK292551">
    <property type="protein sequence ID" value="BAF85240.1"/>
    <property type="molecule type" value="mRNA"/>
</dbReference>
<dbReference type="EMBL" id="AC011744">
    <property type="status" value="NOT_ANNOTATED_CDS"/>
    <property type="molecule type" value="Genomic_DNA"/>
</dbReference>
<dbReference type="EMBL" id="AC105415">
    <property type="status" value="NOT_ANNOTATED_CDS"/>
    <property type="molecule type" value="Genomic_DNA"/>
</dbReference>
<dbReference type="EMBL" id="BC016477">
    <property type="protein sequence ID" value="AAH16477.1"/>
    <property type="status" value="ALT_SEQ"/>
    <property type="molecule type" value="mRNA"/>
</dbReference>
<dbReference type="EMBL" id="BC089401">
    <property type="protein sequence ID" value="AAH89401.1"/>
    <property type="molecule type" value="mRNA"/>
</dbReference>
<dbReference type="EMBL" id="BC109087">
    <property type="protein sequence ID" value="AAI09088.1"/>
    <property type="molecule type" value="mRNA"/>
</dbReference>
<dbReference type="EMBL" id="AB209466">
    <property type="protein sequence ID" value="BAD92703.1"/>
    <property type="molecule type" value="Transcribed_RNA"/>
</dbReference>
<dbReference type="CCDS" id="CCDS3375.1">
    <molecule id="Q6ZSB9-1"/>
</dbReference>
<dbReference type="RefSeq" id="NP_001317554.1">
    <molecule id="Q6ZSB9-1"/>
    <property type="nucleotide sequence ID" value="NM_001330625.2"/>
</dbReference>
<dbReference type="RefSeq" id="NP_660334.3">
    <molecule id="Q6ZSB9-1"/>
    <property type="nucleotide sequence ID" value="NM_145291.3"/>
</dbReference>
<dbReference type="RefSeq" id="XP_005248008.1">
    <molecule id="Q6ZSB9-5"/>
    <property type="nucleotide sequence ID" value="XM_005247951.5"/>
</dbReference>
<dbReference type="RefSeq" id="XP_011511718.1">
    <molecule id="Q6ZSB9-2"/>
    <property type="nucleotide sequence ID" value="XM_011513416.2"/>
</dbReference>
<dbReference type="RefSeq" id="XP_047305662.1">
    <molecule id="Q6ZSB9-2"/>
    <property type="nucleotide sequence ID" value="XM_047449706.1"/>
</dbReference>
<dbReference type="RefSeq" id="XP_047305663.1">
    <molecule id="Q6ZSB9-5"/>
    <property type="nucleotide sequence ID" value="XM_047449707.1"/>
</dbReference>
<dbReference type="RefSeq" id="XP_054205077.1">
    <molecule id="Q6ZSB9-2"/>
    <property type="nucleotide sequence ID" value="XM_054349102.1"/>
</dbReference>
<dbReference type="RefSeq" id="XP_054205078.1">
    <molecule id="Q6ZSB9-2"/>
    <property type="nucleotide sequence ID" value="XM_054349103.1"/>
</dbReference>
<dbReference type="RefSeq" id="XP_054205079.1">
    <molecule id="Q6ZSB9-5"/>
    <property type="nucleotide sequence ID" value="XM_054349104.1"/>
</dbReference>
<dbReference type="RefSeq" id="XP_054205080.1">
    <molecule id="Q6ZSB9-5"/>
    <property type="nucleotide sequence ID" value="XM_054349105.1"/>
</dbReference>
<dbReference type="SMR" id="Q6ZSB9"/>
<dbReference type="BioGRID" id="127934">
    <property type="interactions" value="28"/>
</dbReference>
<dbReference type="FunCoup" id="Q6ZSB9">
    <property type="interactions" value="3275"/>
</dbReference>
<dbReference type="IntAct" id="Q6ZSB9">
    <property type="interactions" value="22"/>
</dbReference>
<dbReference type="STRING" id="9606.ENSP00000338807"/>
<dbReference type="iPTMnet" id="Q6ZSB9"/>
<dbReference type="PhosphoSitePlus" id="Q6ZSB9"/>
<dbReference type="BioMuta" id="ZBTB49"/>
<dbReference type="DMDM" id="296453078"/>
<dbReference type="jPOST" id="Q6ZSB9"/>
<dbReference type="MassIVE" id="Q6ZSB9"/>
<dbReference type="PaxDb" id="9606-ENSP00000338807"/>
<dbReference type="PeptideAtlas" id="Q6ZSB9"/>
<dbReference type="ProteomicsDB" id="68212">
    <molecule id="Q6ZSB9-1"/>
</dbReference>
<dbReference type="ProteomicsDB" id="68213">
    <molecule id="Q6ZSB9-2"/>
</dbReference>
<dbReference type="Antibodypedia" id="9229">
    <property type="antibodies" value="101 antibodies from 21 providers"/>
</dbReference>
<dbReference type="DNASU" id="166793"/>
<dbReference type="Ensembl" id="ENST00000337872.9">
    <molecule id="Q6ZSB9-1"/>
    <property type="protein sequence ID" value="ENSP00000338807.4"/>
    <property type="gene ID" value="ENSG00000168826.16"/>
</dbReference>
<dbReference type="GeneID" id="166793"/>
<dbReference type="KEGG" id="hsa:166793"/>
<dbReference type="MANE-Select" id="ENST00000337872.9">
    <property type="protein sequence ID" value="ENSP00000338807.4"/>
    <property type="RefSeq nucleotide sequence ID" value="NM_145291.4"/>
    <property type="RefSeq protein sequence ID" value="NP_660334.3"/>
</dbReference>
<dbReference type="UCSC" id="uc003ghu.4">
    <molecule id="Q6ZSB9-1"/>
    <property type="organism name" value="human"/>
</dbReference>
<dbReference type="AGR" id="HGNC:19883"/>
<dbReference type="CTD" id="166793"/>
<dbReference type="GeneCards" id="ZBTB49"/>
<dbReference type="HGNC" id="HGNC:19883">
    <property type="gene designation" value="ZBTB49"/>
</dbReference>
<dbReference type="HPA" id="ENSG00000168826">
    <property type="expression patterns" value="Low tissue specificity"/>
</dbReference>
<dbReference type="MIM" id="616238">
    <property type="type" value="gene"/>
</dbReference>
<dbReference type="neXtProt" id="NX_Q6ZSB9"/>
<dbReference type="OpenTargets" id="ENSG00000168826"/>
<dbReference type="PharmGKB" id="PA165664822"/>
<dbReference type="VEuPathDB" id="HostDB:ENSG00000168826"/>
<dbReference type="eggNOG" id="KOG1721">
    <property type="taxonomic scope" value="Eukaryota"/>
</dbReference>
<dbReference type="GeneTree" id="ENSGT00940000158750"/>
<dbReference type="HOGENOM" id="CLU_018392_0_0_1"/>
<dbReference type="InParanoid" id="Q6ZSB9"/>
<dbReference type="OMA" id="QKQYTCE"/>
<dbReference type="OrthoDB" id="407106at2759"/>
<dbReference type="PAN-GO" id="Q6ZSB9">
    <property type="GO annotations" value="4 GO annotations based on evolutionary models"/>
</dbReference>
<dbReference type="PhylomeDB" id="Q6ZSB9"/>
<dbReference type="TreeFam" id="TF330993"/>
<dbReference type="PathwayCommons" id="Q6ZSB9"/>
<dbReference type="SignaLink" id="Q6ZSB9"/>
<dbReference type="BioGRID-ORCS" id="166793">
    <property type="hits" value="13 hits in 1215 CRISPR screens"/>
</dbReference>
<dbReference type="ChiTaRS" id="ZBTB49">
    <property type="organism name" value="human"/>
</dbReference>
<dbReference type="GenomeRNAi" id="166793"/>
<dbReference type="Pharos" id="Q6ZSB9">
    <property type="development level" value="Tdark"/>
</dbReference>
<dbReference type="PRO" id="PR:Q6ZSB9"/>
<dbReference type="Proteomes" id="UP000005640">
    <property type="component" value="Chromosome 4"/>
</dbReference>
<dbReference type="RNAct" id="Q6ZSB9">
    <property type="molecule type" value="protein"/>
</dbReference>
<dbReference type="Bgee" id="ENSG00000168826">
    <property type="expression patterns" value="Expressed in oocyte and 132 other cell types or tissues"/>
</dbReference>
<dbReference type="ExpressionAtlas" id="Q6ZSB9">
    <property type="expression patterns" value="baseline and differential"/>
</dbReference>
<dbReference type="GO" id="GO:0005737">
    <property type="term" value="C:cytoplasm"/>
    <property type="evidence" value="ECO:0000314"/>
    <property type="project" value="UniProtKB"/>
</dbReference>
<dbReference type="GO" id="GO:0005829">
    <property type="term" value="C:cytosol"/>
    <property type="evidence" value="ECO:0000314"/>
    <property type="project" value="HPA"/>
</dbReference>
<dbReference type="GO" id="GO:0015630">
    <property type="term" value="C:microtubule cytoskeleton"/>
    <property type="evidence" value="ECO:0000314"/>
    <property type="project" value="HPA"/>
</dbReference>
<dbReference type="GO" id="GO:0005654">
    <property type="term" value="C:nucleoplasm"/>
    <property type="evidence" value="ECO:0000314"/>
    <property type="project" value="HPA"/>
</dbReference>
<dbReference type="GO" id="GO:0005634">
    <property type="term" value="C:nucleus"/>
    <property type="evidence" value="ECO:0000314"/>
    <property type="project" value="UniProtKB"/>
</dbReference>
<dbReference type="GO" id="GO:0140297">
    <property type="term" value="F:DNA-binding transcription factor binding"/>
    <property type="evidence" value="ECO:0000314"/>
    <property type="project" value="UniProtKB"/>
</dbReference>
<dbReference type="GO" id="GO:0001227">
    <property type="term" value="F:DNA-binding transcription repressor activity, RNA polymerase II-specific"/>
    <property type="evidence" value="ECO:0000318"/>
    <property type="project" value="GO_Central"/>
</dbReference>
<dbReference type="GO" id="GO:0000978">
    <property type="term" value="F:RNA polymerase II cis-regulatory region sequence-specific DNA binding"/>
    <property type="evidence" value="ECO:0000318"/>
    <property type="project" value="GO_Central"/>
</dbReference>
<dbReference type="GO" id="GO:0043565">
    <property type="term" value="F:sequence-specific DNA binding"/>
    <property type="evidence" value="ECO:0000314"/>
    <property type="project" value="UniProtKB"/>
</dbReference>
<dbReference type="GO" id="GO:0001223">
    <property type="term" value="F:transcription coactivator binding"/>
    <property type="evidence" value="ECO:0000353"/>
    <property type="project" value="UniProtKB"/>
</dbReference>
<dbReference type="GO" id="GO:0008270">
    <property type="term" value="F:zinc ion binding"/>
    <property type="evidence" value="ECO:0007669"/>
    <property type="project" value="UniProtKB-KW"/>
</dbReference>
<dbReference type="GO" id="GO:0008285">
    <property type="term" value="P:negative regulation of cell population proliferation"/>
    <property type="evidence" value="ECO:0000314"/>
    <property type="project" value="UniProtKB"/>
</dbReference>
<dbReference type="GO" id="GO:0000122">
    <property type="term" value="P:negative regulation of transcription by RNA polymerase II"/>
    <property type="evidence" value="ECO:0000318"/>
    <property type="project" value="GO_Central"/>
</dbReference>
<dbReference type="GO" id="GO:0045944">
    <property type="term" value="P:positive regulation of transcription by RNA polymerase II"/>
    <property type="evidence" value="ECO:0000314"/>
    <property type="project" value="UniProtKB"/>
</dbReference>
<dbReference type="GO" id="GO:0051726">
    <property type="term" value="P:regulation of cell cycle"/>
    <property type="evidence" value="ECO:0000314"/>
    <property type="project" value="UniProtKB"/>
</dbReference>
<dbReference type="GO" id="GO:0001817">
    <property type="term" value="P:regulation of cytokine production"/>
    <property type="evidence" value="ECO:0000318"/>
    <property type="project" value="GO_Central"/>
</dbReference>
<dbReference type="GO" id="GO:0002682">
    <property type="term" value="P:regulation of immune system process"/>
    <property type="evidence" value="ECO:0000318"/>
    <property type="project" value="GO_Central"/>
</dbReference>
<dbReference type="CDD" id="cd18233">
    <property type="entry name" value="BTB_POZ_ZBTB49"/>
    <property type="match status" value="1"/>
</dbReference>
<dbReference type="FunFam" id="3.30.160.60:FF:000166">
    <property type="entry name" value="Zinc finger and BTB domain-containing 49"/>
    <property type="match status" value="1"/>
</dbReference>
<dbReference type="FunFam" id="3.30.710.10:FF:000048">
    <property type="entry name" value="zinc finger and BTB domain-containing protein 17"/>
    <property type="match status" value="1"/>
</dbReference>
<dbReference type="FunFam" id="3.30.160.60:FF:000835">
    <property type="entry name" value="Zinc finger and BTB domain-containing protein 49"/>
    <property type="match status" value="1"/>
</dbReference>
<dbReference type="FunFam" id="3.30.160.60:FF:000927">
    <property type="entry name" value="Zinc finger and BTB domain-containing protein 49"/>
    <property type="match status" value="1"/>
</dbReference>
<dbReference type="FunFam" id="3.30.160.60:FF:001123">
    <property type="entry name" value="Zinc finger and BTB domain-containing protein 49"/>
    <property type="match status" value="1"/>
</dbReference>
<dbReference type="FunFam" id="3.30.160.60:FF:001338">
    <property type="entry name" value="Zinc finger and BTB domain-containing protein 49"/>
    <property type="match status" value="1"/>
</dbReference>
<dbReference type="FunFam" id="3.30.160.60:FF:001099">
    <property type="entry name" value="zinc finger and BTB domain-containing protein 49"/>
    <property type="match status" value="1"/>
</dbReference>
<dbReference type="FunFam" id="3.30.160.60:FF:001158">
    <property type="entry name" value="zinc finger protein 22"/>
    <property type="match status" value="1"/>
</dbReference>
<dbReference type="Gene3D" id="3.30.160.60">
    <property type="entry name" value="Classic Zinc Finger"/>
    <property type="match status" value="7"/>
</dbReference>
<dbReference type="Gene3D" id="3.30.710.10">
    <property type="entry name" value="Potassium Channel Kv1.1, Chain A"/>
    <property type="match status" value="1"/>
</dbReference>
<dbReference type="InterPro" id="IPR000210">
    <property type="entry name" value="BTB/POZ_dom"/>
</dbReference>
<dbReference type="InterPro" id="IPR011333">
    <property type="entry name" value="SKP1/BTB/POZ_sf"/>
</dbReference>
<dbReference type="InterPro" id="IPR036236">
    <property type="entry name" value="Znf_C2H2_sf"/>
</dbReference>
<dbReference type="InterPro" id="IPR013087">
    <property type="entry name" value="Znf_C2H2_type"/>
</dbReference>
<dbReference type="InterPro" id="IPR050457">
    <property type="entry name" value="ZnFinger_BTB_dom_contain"/>
</dbReference>
<dbReference type="PANTHER" id="PTHR46105">
    <property type="entry name" value="AGAP004733-PA"/>
    <property type="match status" value="1"/>
</dbReference>
<dbReference type="PANTHER" id="PTHR46105:SF5">
    <property type="entry name" value="ZINC FINGER AND BTB DOMAIN-CONTAINING PROTEIN 44 ISOFORM X1"/>
    <property type="match status" value="1"/>
</dbReference>
<dbReference type="Pfam" id="PF00651">
    <property type="entry name" value="BTB"/>
    <property type="match status" value="1"/>
</dbReference>
<dbReference type="Pfam" id="PF00096">
    <property type="entry name" value="zf-C2H2"/>
    <property type="match status" value="6"/>
</dbReference>
<dbReference type="Pfam" id="PF13912">
    <property type="entry name" value="zf-C2H2_6"/>
    <property type="match status" value="1"/>
</dbReference>
<dbReference type="SMART" id="SM00225">
    <property type="entry name" value="BTB"/>
    <property type="match status" value="1"/>
</dbReference>
<dbReference type="SMART" id="SM00355">
    <property type="entry name" value="ZnF_C2H2"/>
    <property type="match status" value="7"/>
</dbReference>
<dbReference type="SUPFAM" id="SSF57667">
    <property type="entry name" value="beta-beta-alpha zinc fingers"/>
    <property type="match status" value="4"/>
</dbReference>
<dbReference type="SUPFAM" id="SSF54695">
    <property type="entry name" value="POZ domain"/>
    <property type="match status" value="1"/>
</dbReference>
<dbReference type="PROSITE" id="PS50097">
    <property type="entry name" value="BTB"/>
    <property type="match status" value="1"/>
</dbReference>
<dbReference type="PROSITE" id="PS00028">
    <property type="entry name" value="ZINC_FINGER_C2H2_1"/>
    <property type="match status" value="7"/>
</dbReference>
<dbReference type="PROSITE" id="PS50157">
    <property type="entry name" value="ZINC_FINGER_C2H2_2"/>
    <property type="match status" value="7"/>
</dbReference>
<accession>Q6ZSB9</accession>
<accession>A8K936</accession>
<accession>Q32ML0</accession>
<accession>Q59FJ4</accession>
<accession>Q5EBN0</accession>
<accession>Q8TB80</accession>